<feature type="chain" id="PRO_0000416421" description="Bifunctional NAD(P)H-hydrate repair enzyme Nnr">
    <location>
        <begin position="1"/>
        <end position="512"/>
    </location>
</feature>
<feature type="domain" description="YjeF N-terminal">
    <location>
        <begin position="11"/>
        <end position="218"/>
    </location>
</feature>
<feature type="domain" description="YjeF C-terminal">
    <location>
        <begin position="228"/>
        <end position="509"/>
    </location>
</feature>
<feature type="region of interest" description="NAD(P)H-hydrate epimerase" evidence="1">
    <location>
        <begin position="1"/>
        <end position="220"/>
    </location>
</feature>
<feature type="region of interest" description="NADPHX 1; for epimerase activity" evidence="1">
    <location>
        <begin position="58"/>
        <end position="62"/>
    </location>
</feature>
<feature type="region of interest" description="NADPHX 1; for epimerase activity" evidence="1">
    <location>
        <begin position="131"/>
        <end position="137"/>
    </location>
</feature>
<feature type="region of interest" description="ADP-dependent (S)-NAD(P)H-hydrate dehydratase" evidence="1">
    <location>
        <begin position="228"/>
        <end position="512"/>
    </location>
</feature>
<feature type="region of interest" description="NADPHX 2; for dehydratase activity" evidence="1">
    <location>
        <begin position="385"/>
        <end position="391"/>
    </location>
</feature>
<feature type="binding site" evidence="1">
    <location>
        <position position="59"/>
    </location>
    <ligand>
        <name>K(+)</name>
        <dbReference type="ChEBI" id="CHEBI:29103"/>
    </ligand>
</feature>
<feature type="binding site" evidence="1">
    <location>
        <position position="127"/>
    </location>
    <ligand>
        <name>K(+)</name>
        <dbReference type="ChEBI" id="CHEBI:29103"/>
    </ligand>
</feature>
<feature type="binding site" evidence="1">
    <location>
        <position position="161"/>
    </location>
    <ligand>
        <name>(6S)-NADPHX</name>
        <dbReference type="ChEBI" id="CHEBI:64076"/>
        <label>1</label>
        <note>for epimerase activity</note>
    </ligand>
</feature>
<feature type="binding site" evidence="1">
    <location>
        <position position="164"/>
    </location>
    <ligand>
        <name>K(+)</name>
        <dbReference type="ChEBI" id="CHEBI:29103"/>
    </ligand>
</feature>
<feature type="binding site" evidence="1">
    <location>
        <position position="335"/>
    </location>
    <ligand>
        <name>(6S)-NADPHX</name>
        <dbReference type="ChEBI" id="CHEBI:64076"/>
        <label>2</label>
        <note>for dehydratase activity</note>
    </ligand>
</feature>
<feature type="binding site" evidence="1">
    <location>
        <begin position="421"/>
        <end position="425"/>
    </location>
    <ligand>
        <name>ADP</name>
        <dbReference type="ChEBI" id="CHEBI:456216"/>
    </ligand>
</feature>
<feature type="binding site" evidence="1">
    <location>
        <begin position="440"/>
        <end position="449"/>
    </location>
    <ligand>
        <name>ADP</name>
        <dbReference type="ChEBI" id="CHEBI:456216"/>
    </ligand>
</feature>
<feature type="binding site" evidence="1">
    <location>
        <position position="450"/>
    </location>
    <ligand>
        <name>(6S)-NADPHX</name>
        <dbReference type="ChEBI" id="CHEBI:64076"/>
        <label>2</label>
        <note>for dehydratase activity</note>
    </ligand>
</feature>
<sequence length="512" mass="52794">MPIVAYDPDKVREADRAAVRMGVPGGILMENAGAAAASVIWDRFRPTGRVVILCGPGNNGGDGFVVARHLMIRGAEVVVLSTSVDRRGDSKAAEDMYLACGGRVLASSEVSDPEVSDLLGGACLVVDALLGTGSGGEIRGQVARLVELLLETYSGPLVALDMPTGFHGRTGVSLGVGVRADLTVTFLAPKSGAMFTPAFDHVGEMVVSPIGVPPRLVLPQRADVVGVGYEDLSHMRLPMWPGQNKSHRGMVAVLGGSGMFGGAPFLSAMGALCGGAGWVVCGVPSQWAPTYGHLVPESMVLPLPSDGRGDLTSEAWDVIASSYGDRIRCLVLGPGMGRGEGASSLVRRVLSSWDGPLVLDADGLRILADTGLPREARCSLWITPHEGEAACLLGTSSRWVVENRRDAAEALASRFGGVVLKGRNSVVMRGEALSVVCAGHPNLSVPGSGDVLAGIIGASIARMGDVEEAVCLAVILHGVAGERLASSGRADGILAREIAHQAALVLGGLGDV</sequence>
<reference key="1">
    <citation type="journal article" date="2009" name="Stand. Genomic Sci.">
        <title>Complete genome sequence of Thermanaerovibrio acidaminovorans type strain (Su883).</title>
        <authorList>
            <person name="Chovatia M."/>
            <person name="Sikorski J."/>
            <person name="Schroder M."/>
            <person name="Lapidus A."/>
            <person name="Nolan M."/>
            <person name="Tice H."/>
            <person name="Glavina Del Rio T."/>
            <person name="Copeland A."/>
            <person name="Cheng J.F."/>
            <person name="Lucas S."/>
            <person name="Chen F."/>
            <person name="Bruce D."/>
            <person name="Goodwin L."/>
            <person name="Pitluck S."/>
            <person name="Ivanova N."/>
            <person name="Mavromatis K."/>
            <person name="Ovchinnikova G."/>
            <person name="Pati A."/>
            <person name="Chen A."/>
            <person name="Palaniappan K."/>
            <person name="Land M."/>
            <person name="Hauser L."/>
            <person name="Chang Y.J."/>
            <person name="Jeffries C.D."/>
            <person name="Chain P."/>
            <person name="Saunders E."/>
            <person name="Detter J.C."/>
            <person name="Brettin T."/>
            <person name="Rohde M."/>
            <person name="Goker M."/>
            <person name="Spring S."/>
            <person name="Bristow J."/>
            <person name="Markowitz V."/>
            <person name="Hugenholtz P."/>
            <person name="Kyrpides N.C."/>
            <person name="Klenk H.P."/>
            <person name="Eisen J.A."/>
        </authorList>
    </citation>
    <scope>NUCLEOTIDE SEQUENCE [LARGE SCALE GENOMIC DNA]</scope>
    <source>
        <strain>ATCC 49978 / DSM 6589 / Su883</strain>
    </source>
</reference>
<accession>D1BAA5</accession>
<name>NNR_THEAS</name>
<keyword id="KW-0067">ATP-binding</keyword>
<keyword id="KW-0413">Isomerase</keyword>
<keyword id="KW-0456">Lyase</keyword>
<keyword id="KW-0479">Metal-binding</keyword>
<keyword id="KW-0511">Multifunctional enzyme</keyword>
<keyword id="KW-0520">NAD</keyword>
<keyword id="KW-0521">NADP</keyword>
<keyword id="KW-0547">Nucleotide-binding</keyword>
<keyword id="KW-0630">Potassium</keyword>
<keyword id="KW-1185">Reference proteome</keyword>
<organism>
    <name type="scientific">Thermanaerovibrio acidaminovorans (strain ATCC 49978 / DSM 6589 / Su883)</name>
    <name type="common">Selenomonas acidaminovorans</name>
    <dbReference type="NCBI Taxonomy" id="525903"/>
    <lineage>
        <taxon>Bacteria</taxon>
        <taxon>Thermotogati</taxon>
        <taxon>Synergistota</taxon>
        <taxon>Synergistia</taxon>
        <taxon>Synergistales</taxon>
        <taxon>Synergistaceae</taxon>
        <taxon>Thermanaerovibrio</taxon>
    </lineage>
</organism>
<dbReference type="EC" id="4.2.1.136"/>
<dbReference type="EC" id="5.1.99.6"/>
<dbReference type="EMBL" id="CP001818">
    <property type="protein sequence ID" value="ACZ19208.1"/>
    <property type="molecule type" value="Genomic_DNA"/>
</dbReference>
<dbReference type="RefSeq" id="WP_012869723.1">
    <property type="nucleotide sequence ID" value="NC_013522.1"/>
</dbReference>
<dbReference type="RefSeq" id="YP_003317490.1">
    <property type="nucleotide sequence ID" value="NC_013522.1"/>
</dbReference>
<dbReference type="SMR" id="D1BAA5"/>
<dbReference type="STRING" id="525903.Taci_0976"/>
<dbReference type="EnsemblBacteria" id="ACZ19208">
    <property type="protein sequence ID" value="ACZ19208"/>
    <property type="gene ID" value="Taci_0976"/>
</dbReference>
<dbReference type="KEGG" id="tai:Taci_0976"/>
<dbReference type="PATRIC" id="fig|525903.6.peg.973"/>
<dbReference type="eggNOG" id="COG0062">
    <property type="taxonomic scope" value="Bacteria"/>
</dbReference>
<dbReference type="eggNOG" id="COG0063">
    <property type="taxonomic scope" value="Bacteria"/>
</dbReference>
<dbReference type="HOGENOM" id="CLU_024853_4_1_0"/>
<dbReference type="OrthoDB" id="9806925at2"/>
<dbReference type="Proteomes" id="UP000002030">
    <property type="component" value="Chromosome"/>
</dbReference>
<dbReference type="GO" id="GO:0052855">
    <property type="term" value="F:ADP-dependent NAD(P)H-hydrate dehydratase activity"/>
    <property type="evidence" value="ECO:0007669"/>
    <property type="project" value="UniProtKB-UniRule"/>
</dbReference>
<dbReference type="GO" id="GO:0005524">
    <property type="term" value="F:ATP binding"/>
    <property type="evidence" value="ECO:0007669"/>
    <property type="project" value="UniProtKB-KW"/>
</dbReference>
<dbReference type="GO" id="GO:0046872">
    <property type="term" value="F:metal ion binding"/>
    <property type="evidence" value="ECO:0007669"/>
    <property type="project" value="UniProtKB-KW"/>
</dbReference>
<dbReference type="GO" id="GO:0052856">
    <property type="term" value="F:NAD(P)HX epimerase activity"/>
    <property type="evidence" value="ECO:0007669"/>
    <property type="project" value="UniProtKB-UniRule"/>
</dbReference>
<dbReference type="GO" id="GO:0110051">
    <property type="term" value="P:metabolite repair"/>
    <property type="evidence" value="ECO:0007669"/>
    <property type="project" value="TreeGrafter"/>
</dbReference>
<dbReference type="GO" id="GO:0046496">
    <property type="term" value="P:nicotinamide nucleotide metabolic process"/>
    <property type="evidence" value="ECO:0007669"/>
    <property type="project" value="UniProtKB-UniRule"/>
</dbReference>
<dbReference type="CDD" id="cd01171">
    <property type="entry name" value="YXKO-related"/>
    <property type="match status" value="1"/>
</dbReference>
<dbReference type="Gene3D" id="3.40.1190.20">
    <property type="match status" value="1"/>
</dbReference>
<dbReference type="Gene3D" id="3.40.50.10260">
    <property type="entry name" value="YjeF N-terminal domain"/>
    <property type="match status" value="1"/>
</dbReference>
<dbReference type="HAMAP" id="MF_01965">
    <property type="entry name" value="NADHX_dehydratase"/>
    <property type="match status" value="1"/>
</dbReference>
<dbReference type="HAMAP" id="MF_01966">
    <property type="entry name" value="NADHX_epimerase"/>
    <property type="match status" value="1"/>
</dbReference>
<dbReference type="InterPro" id="IPR000631">
    <property type="entry name" value="CARKD"/>
</dbReference>
<dbReference type="InterPro" id="IPR030677">
    <property type="entry name" value="Nnr"/>
</dbReference>
<dbReference type="InterPro" id="IPR029056">
    <property type="entry name" value="Ribokinase-like"/>
</dbReference>
<dbReference type="InterPro" id="IPR004443">
    <property type="entry name" value="YjeF_N_dom"/>
</dbReference>
<dbReference type="InterPro" id="IPR036652">
    <property type="entry name" value="YjeF_N_dom_sf"/>
</dbReference>
<dbReference type="NCBIfam" id="TIGR00196">
    <property type="entry name" value="yjeF_cterm"/>
    <property type="match status" value="1"/>
</dbReference>
<dbReference type="NCBIfam" id="TIGR00197">
    <property type="entry name" value="yjeF_nterm"/>
    <property type="match status" value="1"/>
</dbReference>
<dbReference type="PANTHER" id="PTHR12592:SF0">
    <property type="entry name" value="ATP-DEPENDENT (S)-NAD(P)H-HYDRATE DEHYDRATASE"/>
    <property type="match status" value="1"/>
</dbReference>
<dbReference type="PANTHER" id="PTHR12592">
    <property type="entry name" value="ATP-DEPENDENT (S)-NAD(P)H-HYDRATE DEHYDRATASE FAMILY MEMBER"/>
    <property type="match status" value="1"/>
</dbReference>
<dbReference type="Pfam" id="PF01256">
    <property type="entry name" value="Carb_kinase"/>
    <property type="match status" value="1"/>
</dbReference>
<dbReference type="Pfam" id="PF03853">
    <property type="entry name" value="YjeF_N"/>
    <property type="match status" value="1"/>
</dbReference>
<dbReference type="PIRSF" id="PIRSF017184">
    <property type="entry name" value="Nnr"/>
    <property type="match status" value="1"/>
</dbReference>
<dbReference type="SUPFAM" id="SSF53613">
    <property type="entry name" value="Ribokinase-like"/>
    <property type="match status" value="1"/>
</dbReference>
<dbReference type="SUPFAM" id="SSF64153">
    <property type="entry name" value="YjeF N-terminal domain-like"/>
    <property type="match status" value="1"/>
</dbReference>
<dbReference type="PROSITE" id="PS51383">
    <property type="entry name" value="YJEF_C_3"/>
    <property type="match status" value="1"/>
</dbReference>
<dbReference type="PROSITE" id="PS51385">
    <property type="entry name" value="YJEF_N"/>
    <property type="match status" value="1"/>
</dbReference>
<comment type="function">
    <text evidence="1">Bifunctional enzyme that catalyzes the epimerization of the S- and R-forms of NAD(P)HX and the dehydration of the S-form of NAD(P)HX at the expense of ADP, which is converted to AMP. This allows the repair of both epimers of NAD(P)HX, a damaged form of NAD(P)H that is a result of enzymatic or heat-dependent hydration (By similarity).</text>
</comment>
<comment type="catalytic activity">
    <reaction>
        <text>(6S)-NADHX + ADP = AMP + phosphate + NADH + H(+)</text>
        <dbReference type="Rhea" id="RHEA:32223"/>
        <dbReference type="ChEBI" id="CHEBI:15378"/>
        <dbReference type="ChEBI" id="CHEBI:43474"/>
        <dbReference type="ChEBI" id="CHEBI:57945"/>
        <dbReference type="ChEBI" id="CHEBI:64074"/>
        <dbReference type="ChEBI" id="CHEBI:456215"/>
        <dbReference type="ChEBI" id="CHEBI:456216"/>
        <dbReference type="EC" id="4.2.1.136"/>
    </reaction>
</comment>
<comment type="catalytic activity">
    <reaction>
        <text>(6S)-NADPHX + ADP = AMP + phosphate + NADPH + H(+)</text>
        <dbReference type="Rhea" id="RHEA:32235"/>
        <dbReference type="ChEBI" id="CHEBI:15378"/>
        <dbReference type="ChEBI" id="CHEBI:43474"/>
        <dbReference type="ChEBI" id="CHEBI:57783"/>
        <dbReference type="ChEBI" id="CHEBI:64076"/>
        <dbReference type="ChEBI" id="CHEBI:456215"/>
        <dbReference type="ChEBI" id="CHEBI:456216"/>
        <dbReference type="EC" id="4.2.1.136"/>
    </reaction>
</comment>
<comment type="catalytic activity">
    <reaction>
        <text>(6R)-NADHX = (6S)-NADHX</text>
        <dbReference type="Rhea" id="RHEA:32215"/>
        <dbReference type="ChEBI" id="CHEBI:64074"/>
        <dbReference type="ChEBI" id="CHEBI:64075"/>
        <dbReference type="EC" id="5.1.99.6"/>
    </reaction>
</comment>
<comment type="catalytic activity">
    <reaction>
        <text>(6R)-NADPHX = (6S)-NADPHX</text>
        <dbReference type="Rhea" id="RHEA:32227"/>
        <dbReference type="ChEBI" id="CHEBI:64076"/>
        <dbReference type="ChEBI" id="CHEBI:64077"/>
        <dbReference type="EC" id="5.1.99.6"/>
    </reaction>
</comment>
<comment type="cofactor">
    <cofactor evidence="1">
        <name>K(+)</name>
        <dbReference type="ChEBI" id="CHEBI:29103"/>
    </cofactor>
    <text evidence="1">Binds 1 potassium ion per subunit.</text>
</comment>
<comment type="similarity">
    <text evidence="2">In the N-terminal section; belongs to the NnrE/AIBP family.</text>
</comment>
<comment type="similarity">
    <text evidence="2">In the C-terminal section; belongs to the NnrD/CARKD family.</text>
</comment>
<protein>
    <recommendedName>
        <fullName>Bifunctional NAD(P)H-hydrate repair enzyme Nnr</fullName>
    </recommendedName>
    <alternativeName>
        <fullName>Nicotinamide nucleotide repair protein</fullName>
    </alternativeName>
    <domain>
        <recommendedName>
            <fullName>ADP-dependent (S)-NAD(P)H-hydrate dehydratase</fullName>
            <ecNumber>4.2.1.136</ecNumber>
        </recommendedName>
        <alternativeName>
            <fullName>ADP-dependent NAD(P)HX dehydratase</fullName>
        </alternativeName>
    </domain>
    <domain>
        <recommendedName>
            <fullName>NAD(P)H-hydrate epimerase</fullName>
            <ecNumber>5.1.99.6</ecNumber>
        </recommendedName>
        <alternativeName>
            <fullName>NAD(P)HX epimerase</fullName>
        </alternativeName>
    </domain>
</protein>
<gene>
    <name type="primary">nnr</name>
    <name type="ordered locus">Taci_0976</name>
</gene>
<evidence type="ECO:0000250" key="1"/>
<evidence type="ECO:0000305" key="2"/>
<proteinExistence type="inferred from homology"/>